<keyword id="KW-0479">Metal-binding</keyword>
<keyword id="KW-0521">NADP</keyword>
<keyword id="KW-0560">Oxidoreductase</keyword>
<keyword id="KW-0630">Potassium</keyword>
<keyword id="KW-1185">Reference proteome</keyword>
<feature type="chain" id="PRO_1000025611" description="GMP reductase">
    <location>
        <begin position="1"/>
        <end position="347"/>
    </location>
</feature>
<feature type="active site" description="Thioimidate intermediate" evidence="1">
    <location>
        <position position="186"/>
    </location>
</feature>
<feature type="binding site" evidence="1">
    <location>
        <begin position="108"/>
        <end position="131"/>
    </location>
    <ligand>
        <name>NADP(+)</name>
        <dbReference type="ChEBI" id="CHEBI:58349"/>
    </ligand>
</feature>
<feature type="binding site" evidence="1">
    <location>
        <position position="181"/>
    </location>
    <ligand>
        <name>K(+)</name>
        <dbReference type="ChEBI" id="CHEBI:29103"/>
    </ligand>
</feature>
<feature type="binding site" evidence="1">
    <location>
        <position position="183"/>
    </location>
    <ligand>
        <name>K(+)</name>
        <dbReference type="ChEBI" id="CHEBI:29103"/>
    </ligand>
</feature>
<feature type="binding site" evidence="1">
    <location>
        <begin position="216"/>
        <end position="239"/>
    </location>
    <ligand>
        <name>NADP(+)</name>
        <dbReference type="ChEBI" id="CHEBI:58349"/>
    </ligand>
</feature>
<protein>
    <recommendedName>
        <fullName evidence="1">GMP reductase</fullName>
        <ecNumber evidence="1">1.7.1.7</ecNumber>
    </recommendedName>
    <alternativeName>
        <fullName evidence="1">Guanosine 5'-monophosphate oxidoreductase</fullName>
        <shortName evidence="1">Guanosine monophosphate reductase</shortName>
    </alternativeName>
</protein>
<comment type="function">
    <text evidence="1">Catalyzes the irreversible NADPH-dependent deamination of GMP to IMP. It functions in the conversion of nucleobase, nucleoside and nucleotide derivatives of G to A nucleotides, and in maintaining the intracellular balance of A and G nucleotides.</text>
</comment>
<comment type="catalytic activity">
    <reaction evidence="1">
        <text>IMP + NH4(+) + NADP(+) = GMP + NADPH + 2 H(+)</text>
        <dbReference type="Rhea" id="RHEA:17185"/>
        <dbReference type="ChEBI" id="CHEBI:15378"/>
        <dbReference type="ChEBI" id="CHEBI:28938"/>
        <dbReference type="ChEBI" id="CHEBI:57783"/>
        <dbReference type="ChEBI" id="CHEBI:58053"/>
        <dbReference type="ChEBI" id="CHEBI:58115"/>
        <dbReference type="ChEBI" id="CHEBI:58349"/>
        <dbReference type="EC" id="1.7.1.7"/>
    </reaction>
</comment>
<comment type="subunit">
    <text evidence="1">Homotetramer.</text>
</comment>
<comment type="similarity">
    <text evidence="1">Belongs to the IMPDH/GMPR family. GuaC type 1 subfamily.</text>
</comment>
<reference key="1">
    <citation type="journal article" date="2007" name="J. Bacteriol.">
        <title>The genome sequence of avian pathogenic Escherichia coli strain O1:K1:H7 shares strong similarities with human extraintestinal pathogenic E. coli genomes.</title>
        <authorList>
            <person name="Johnson T.J."/>
            <person name="Kariyawasam S."/>
            <person name="Wannemuehler Y."/>
            <person name="Mangiamele P."/>
            <person name="Johnson S.J."/>
            <person name="Doetkott C."/>
            <person name="Skyberg J.A."/>
            <person name="Lynne A.M."/>
            <person name="Johnson J.R."/>
            <person name="Nolan L.K."/>
        </authorList>
    </citation>
    <scope>NUCLEOTIDE SEQUENCE [LARGE SCALE GENOMIC DNA]</scope>
</reference>
<organism>
    <name type="scientific">Escherichia coli O1:K1 / APEC</name>
    <dbReference type="NCBI Taxonomy" id="405955"/>
    <lineage>
        <taxon>Bacteria</taxon>
        <taxon>Pseudomonadati</taxon>
        <taxon>Pseudomonadota</taxon>
        <taxon>Gammaproteobacteria</taxon>
        <taxon>Enterobacterales</taxon>
        <taxon>Enterobacteriaceae</taxon>
        <taxon>Escherichia</taxon>
    </lineage>
</organism>
<name>GUAC_ECOK1</name>
<sequence length="347" mass="37384">MRIEEDLKLGFKDVLIRPKRSTLKSRSDVELERQFTFKHSGQSWSGVPIIAANMDTVGTFSMASALASFDILTAVHKHYSVEEWQAFINNSSADVLKHVMVSTGTSDADFEKTKQILDLNPALNFVCIDVANGYSEHFVQFVAKAREAWPTKTICAGNVVTGEMCEELILSGADIVKVGIGPGSVCTTRVKTGVGYPQLSAVIECADAAHGLGGMIVSDGGCTTPGDVAKAFGGGADFVMLGGMLAGHEESGGRIVEENGEKFMLFYGMSSESAMKRHVGGVAEYRAAEGKTVKLPLRGPVENTARDILGGLRSACTYVGASRLKELTKRTTFIRVQEQENRIFNNL</sequence>
<proteinExistence type="inferred from homology"/>
<dbReference type="EC" id="1.7.1.7" evidence="1"/>
<dbReference type="EMBL" id="CP000468">
    <property type="protein sequence ID" value="ABI99586.1"/>
    <property type="molecule type" value="Genomic_DNA"/>
</dbReference>
<dbReference type="RefSeq" id="WP_001217338.1">
    <property type="nucleotide sequence ID" value="NZ_CADILS010000048.1"/>
</dbReference>
<dbReference type="SMR" id="A1A7E7"/>
<dbReference type="GeneID" id="93777331"/>
<dbReference type="KEGG" id="ecv:APECO1_1884"/>
<dbReference type="HOGENOM" id="CLU_022552_5_3_6"/>
<dbReference type="Proteomes" id="UP000008216">
    <property type="component" value="Chromosome"/>
</dbReference>
<dbReference type="GO" id="GO:0005829">
    <property type="term" value="C:cytosol"/>
    <property type="evidence" value="ECO:0007669"/>
    <property type="project" value="TreeGrafter"/>
</dbReference>
<dbReference type="GO" id="GO:1902560">
    <property type="term" value="C:GMP reductase complex"/>
    <property type="evidence" value="ECO:0007669"/>
    <property type="project" value="InterPro"/>
</dbReference>
<dbReference type="GO" id="GO:0003920">
    <property type="term" value="F:GMP reductase activity"/>
    <property type="evidence" value="ECO:0007669"/>
    <property type="project" value="UniProtKB-UniRule"/>
</dbReference>
<dbReference type="GO" id="GO:0046872">
    <property type="term" value="F:metal ion binding"/>
    <property type="evidence" value="ECO:0007669"/>
    <property type="project" value="UniProtKB-KW"/>
</dbReference>
<dbReference type="GO" id="GO:0006163">
    <property type="term" value="P:purine nucleotide metabolic process"/>
    <property type="evidence" value="ECO:0007669"/>
    <property type="project" value="UniProtKB-UniRule"/>
</dbReference>
<dbReference type="CDD" id="cd00381">
    <property type="entry name" value="IMPDH"/>
    <property type="match status" value="1"/>
</dbReference>
<dbReference type="FunFam" id="3.20.20.70:FF:000012">
    <property type="entry name" value="GMP reductase"/>
    <property type="match status" value="1"/>
</dbReference>
<dbReference type="Gene3D" id="3.20.20.70">
    <property type="entry name" value="Aldolase class I"/>
    <property type="match status" value="1"/>
</dbReference>
<dbReference type="HAMAP" id="MF_00596">
    <property type="entry name" value="GMP_reduct_type1"/>
    <property type="match status" value="1"/>
</dbReference>
<dbReference type="InterPro" id="IPR013785">
    <property type="entry name" value="Aldolase_TIM"/>
</dbReference>
<dbReference type="InterPro" id="IPR050139">
    <property type="entry name" value="GMP_reductase"/>
</dbReference>
<dbReference type="InterPro" id="IPR005993">
    <property type="entry name" value="GMPR"/>
</dbReference>
<dbReference type="InterPro" id="IPR015875">
    <property type="entry name" value="IMP_DH/GMP_Rdtase_CS"/>
</dbReference>
<dbReference type="InterPro" id="IPR001093">
    <property type="entry name" value="IMP_DH_GMPRt"/>
</dbReference>
<dbReference type="NCBIfam" id="TIGR01305">
    <property type="entry name" value="GMP_reduct_1"/>
    <property type="match status" value="1"/>
</dbReference>
<dbReference type="NCBIfam" id="NF003470">
    <property type="entry name" value="PRK05096.1"/>
    <property type="match status" value="1"/>
</dbReference>
<dbReference type="PANTHER" id="PTHR43170">
    <property type="entry name" value="GMP REDUCTASE"/>
    <property type="match status" value="1"/>
</dbReference>
<dbReference type="PANTHER" id="PTHR43170:SF5">
    <property type="entry name" value="GMP REDUCTASE"/>
    <property type="match status" value="1"/>
</dbReference>
<dbReference type="Pfam" id="PF00478">
    <property type="entry name" value="IMPDH"/>
    <property type="match status" value="1"/>
</dbReference>
<dbReference type="PIRSF" id="PIRSF000235">
    <property type="entry name" value="GMP_reductase"/>
    <property type="match status" value="1"/>
</dbReference>
<dbReference type="SMART" id="SM01240">
    <property type="entry name" value="IMPDH"/>
    <property type="match status" value="1"/>
</dbReference>
<dbReference type="SUPFAM" id="SSF51412">
    <property type="entry name" value="Inosine monophosphate dehydrogenase (IMPDH)"/>
    <property type="match status" value="1"/>
</dbReference>
<dbReference type="PROSITE" id="PS00487">
    <property type="entry name" value="IMP_DH_GMP_RED"/>
    <property type="match status" value="1"/>
</dbReference>
<gene>
    <name evidence="1" type="primary">guaC</name>
    <name type="ordered locus">Ecok1_00930</name>
    <name type="ORF">APECO1_1884</name>
</gene>
<evidence type="ECO:0000255" key="1">
    <source>
        <dbReference type="HAMAP-Rule" id="MF_00596"/>
    </source>
</evidence>
<accession>A1A7E7</accession>